<proteinExistence type="predicted"/>
<accession>O74867</accession>
<protein>
    <recommendedName>
        <fullName>Uncharacterized protein C18.17c</fullName>
    </recommendedName>
</protein>
<organism>
    <name type="scientific">Schizosaccharomyces pombe (strain 972 / ATCC 24843)</name>
    <name type="common">Fission yeast</name>
    <dbReference type="NCBI Taxonomy" id="284812"/>
    <lineage>
        <taxon>Eukaryota</taxon>
        <taxon>Fungi</taxon>
        <taxon>Dikarya</taxon>
        <taxon>Ascomycota</taxon>
        <taxon>Taphrinomycotina</taxon>
        <taxon>Schizosaccharomycetes</taxon>
        <taxon>Schizosaccharomycetales</taxon>
        <taxon>Schizosaccharomycetaceae</taxon>
        <taxon>Schizosaccharomyces</taxon>
    </lineage>
</organism>
<feature type="chain" id="PRO_0000304092" description="Uncharacterized protein C18.17c">
    <location>
        <begin position="1"/>
        <end position="488"/>
    </location>
</feature>
<name>YQ9H_SCHPO</name>
<comment type="subcellular location">
    <subcellularLocation>
        <location evidence="1">Cytoplasm</location>
    </subcellularLocation>
    <subcellularLocation>
        <location evidence="1">Nucleus</location>
    </subcellularLocation>
</comment>
<keyword id="KW-0963">Cytoplasm</keyword>
<keyword id="KW-0539">Nucleus</keyword>
<keyword id="KW-1185">Reference proteome</keyword>
<evidence type="ECO:0000269" key="1">
    <source>
    </source>
</evidence>
<gene>
    <name type="ORF">SPCC18.17c</name>
</gene>
<dbReference type="EMBL" id="CU329672">
    <property type="protein sequence ID" value="CAA21431.1"/>
    <property type="molecule type" value="Genomic_DNA"/>
</dbReference>
<dbReference type="PIR" id="T41160">
    <property type="entry name" value="T41160"/>
</dbReference>
<dbReference type="RefSeq" id="NP_588396.1">
    <property type="nucleotide sequence ID" value="NM_001023387.2"/>
</dbReference>
<dbReference type="BioGRID" id="275732">
    <property type="interactions" value="74"/>
</dbReference>
<dbReference type="STRING" id="284812.O74867"/>
<dbReference type="PaxDb" id="4896-SPCC18.17c.1"/>
<dbReference type="EnsemblFungi" id="SPCC18.17c.1">
    <property type="protein sequence ID" value="SPCC18.17c.1:pep"/>
    <property type="gene ID" value="SPCC18.17c"/>
</dbReference>
<dbReference type="KEGG" id="spo:2539160"/>
<dbReference type="PomBase" id="SPCC18.17c"/>
<dbReference type="VEuPathDB" id="FungiDB:SPCC18.17c"/>
<dbReference type="eggNOG" id="KOG4413">
    <property type="taxonomic scope" value="Eukaryota"/>
</dbReference>
<dbReference type="HOGENOM" id="CLU_559164_0_0_1"/>
<dbReference type="InParanoid" id="O74867"/>
<dbReference type="OMA" id="CLLHIAQ"/>
<dbReference type="Reactome" id="R-SPO-9907900">
    <property type="pathway name" value="Proteasome assembly"/>
</dbReference>
<dbReference type="PRO" id="PR:O74867"/>
<dbReference type="Proteomes" id="UP000002485">
    <property type="component" value="Chromosome III"/>
</dbReference>
<dbReference type="GO" id="GO:0005829">
    <property type="term" value="C:cytosol"/>
    <property type="evidence" value="ECO:0007005"/>
    <property type="project" value="PomBase"/>
</dbReference>
<dbReference type="GO" id="GO:0005634">
    <property type="term" value="C:nucleus"/>
    <property type="evidence" value="ECO:0007005"/>
    <property type="project" value="PomBase"/>
</dbReference>
<dbReference type="GO" id="GO:0044183">
    <property type="term" value="F:protein folding chaperone"/>
    <property type="evidence" value="ECO:0000303"/>
    <property type="project" value="PomBase"/>
</dbReference>
<dbReference type="GO" id="GO:0070682">
    <property type="term" value="P:proteasome regulatory particle assembly"/>
    <property type="evidence" value="ECO:0000250"/>
    <property type="project" value="PomBase"/>
</dbReference>
<dbReference type="InterPro" id="IPR016024">
    <property type="entry name" value="ARM-type_fold"/>
</dbReference>
<dbReference type="InterPro" id="IPR019538">
    <property type="entry name" value="PSMD5"/>
</dbReference>
<dbReference type="PANTHER" id="PTHR13554:SF10">
    <property type="entry name" value="26S PROTEASOME NON-ATPASE REGULATORY SUBUNIT 5"/>
    <property type="match status" value="1"/>
</dbReference>
<dbReference type="PANTHER" id="PTHR13554">
    <property type="entry name" value="26S PROTEASOME NON-ATPASE REGULATORY SUBUNIT 5-RELATED"/>
    <property type="match status" value="1"/>
</dbReference>
<dbReference type="Pfam" id="PF10508">
    <property type="entry name" value="Proteasom_PSMB"/>
    <property type="match status" value="1"/>
</dbReference>
<dbReference type="SUPFAM" id="SSF48371">
    <property type="entry name" value="ARM repeat"/>
    <property type="match status" value="1"/>
</dbReference>
<reference key="1">
    <citation type="journal article" date="2002" name="Nature">
        <title>The genome sequence of Schizosaccharomyces pombe.</title>
        <authorList>
            <person name="Wood V."/>
            <person name="Gwilliam R."/>
            <person name="Rajandream M.A."/>
            <person name="Lyne M.H."/>
            <person name="Lyne R."/>
            <person name="Stewart A."/>
            <person name="Sgouros J.G."/>
            <person name="Peat N."/>
            <person name="Hayles J."/>
            <person name="Baker S.G."/>
            <person name="Basham D."/>
            <person name="Bowman S."/>
            <person name="Brooks K."/>
            <person name="Brown D."/>
            <person name="Brown S."/>
            <person name="Chillingworth T."/>
            <person name="Churcher C.M."/>
            <person name="Collins M."/>
            <person name="Connor R."/>
            <person name="Cronin A."/>
            <person name="Davis P."/>
            <person name="Feltwell T."/>
            <person name="Fraser A."/>
            <person name="Gentles S."/>
            <person name="Goble A."/>
            <person name="Hamlin N."/>
            <person name="Harris D.E."/>
            <person name="Hidalgo J."/>
            <person name="Hodgson G."/>
            <person name="Holroyd S."/>
            <person name="Hornsby T."/>
            <person name="Howarth S."/>
            <person name="Huckle E.J."/>
            <person name="Hunt S."/>
            <person name="Jagels K."/>
            <person name="James K.D."/>
            <person name="Jones L."/>
            <person name="Jones M."/>
            <person name="Leather S."/>
            <person name="McDonald S."/>
            <person name="McLean J."/>
            <person name="Mooney P."/>
            <person name="Moule S."/>
            <person name="Mungall K.L."/>
            <person name="Murphy L.D."/>
            <person name="Niblett D."/>
            <person name="Odell C."/>
            <person name="Oliver K."/>
            <person name="O'Neil S."/>
            <person name="Pearson D."/>
            <person name="Quail M.A."/>
            <person name="Rabbinowitsch E."/>
            <person name="Rutherford K.M."/>
            <person name="Rutter S."/>
            <person name="Saunders D."/>
            <person name="Seeger K."/>
            <person name="Sharp S."/>
            <person name="Skelton J."/>
            <person name="Simmonds M.N."/>
            <person name="Squares R."/>
            <person name="Squares S."/>
            <person name="Stevens K."/>
            <person name="Taylor K."/>
            <person name="Taylor R.G."/>
            <person name="Tivey A."/>
            <person name="Walsh S.V."/>
            <person name="Warren T."/>
            <person name="Whitehead S."/>
            <person name="Woodward J.R."/>
            <person name="Volckaert G."/>
            <person name="Aert R."/>
            <person name="Robben J."/>
            <person name="Grymonprez B."/>
            <person name="Weltjens I."/>
            <person name="Vanstreels E."/>
            <person name="Rieger M."/>
            <person name="Schaefer M."/>
            <person name="Mueller-Auer S."/>
            <person name="Gabel C."/>
            <person name="Fuchs M."/>
            <person name="Duesterhoeft A."/>
            <person name="Fritzc C."/>
            <person name="Holzer E."/>
            <person name="Moestl D."/>
            <person name="Hilbert H."/>
            <person name="Borzym K."/>
            <person name="Langer I."/>
            <person name="Beck A."/>
            <person name="Lehrach H."/>
            <person name="Reinhardt R."/>
            <person name="Pohl T.M."/>
            <person name="Eger P."/>
            <person name="Zimmermann W."/>
            <person name="Wedler H."/>
            <person name="Wambutt R."/>
            <person name="Purnelle B."/>
            <person name="Goffeau A."/>
            <person name="Cadieu E."/>
            <person name="Dreano S."/>
            <person name="Gloux S."/>
            <person name="Lelaure V."/>
            <person name="Mottier S."/>
            <person name="Galibert F."/>
            <person name="Aves S.J."/>
            <person name="Xiang Z."/>
            <person name="Hunt C."/>
            <person name="Moore K."/>
            <person name="Hurst S.M."/>
            <person name="Lucas M."/>
            <person name="Rochet M."/>
            <person name="Gaillardin C."/>
            <person name="Tallada V.A."/>
            <person name="Garzon A."/>
            <person name="Thode G."/>
            <person name="Daga R.R."/>
            <person name="Cruzado L."/>
            <person name="Jimenez J."/>
            <person name="Sanchez M."/>
            <person name="del Rey F."/>
            <person name="Benito J."/>
            <person name="Dominguez A."/>
            <person name="Revuelta J.L."/>
            <person name="Moreno S."/>
            <person name="Armstrong J."/>
            <person name="Forsburg S.L."/>
            <person name="Cerutti L."/>
            <person name="Lowe T."/>
            <person name="McCombie W.R."/>
            <person name="Paulsen I."/>
            <person name="Potashkin J."/>
            <person name="Shpakovski G.V."/>
            <person name="Ussery D."/>
            <person name="Barrell B.G."/>
            <person name="Nurse P."/>
        </authorList>
    </citation>
    <scope>NUCLEOTIDE SEQUENCE [LARGE SCALE GENOMIC DNA]</scope>
    <source>
        <strain>972 / ATCC 24843</strain>
    </source>
</reference>
<reference key="2">
    <citation type="journal article" date="2006" name="Nat. Biotechnol.">
        <title>ORFeome cloning and global analysis of protein localization in the fission yeast Schizosaccharomyces pombe.</title>
        <authorList>
            <person name="Matsuyama A."/>
            <person name="Arai R."/>
            <person name="Yashiroda Y."/>
            <person name="Shirai A."/>
            <person name="Kamata A."/>
            <person name="Sekido S."/>
            <person name="Kobayashi Y."/>
            <person name="Hashimoto A."/>
            <person name="Hamamoto M."/>
            <person name="Hiraoka Y."/>
            <person name="Horinouchi S."/>
            <person name="Yoshida M."/>
        </authorList>
    </citation>
    <scope>SUBCELLULAR LOCATION [LARGE SCALE ANALYSIS]</scope>
</reference>
<sequence length="488" mass="55357">MDSIELIPGLPGPGRRLLQLLKDLPSNPSVIVREIPDAIDAFRESITPATRPSCLGLLDTILSCFELPIPTEPIMKALGKLLEPMSWADLKKFGIESYLVTGLEHPSTDVEIFCLHLIRRANWEKKEIGEPLFEAIMACINSRSIAVSEEATVLLFDMADFPYYFNLIIKRFTFVDYEIMNSTLRVRWLTLFAKLSTKSPEYLEELIKDDKLVINGDNKDILLQINFVDVLGIMLEAPFTYEYISSEKTKYLDTIAQDYKGSADSYTDHIGLKFLPRLCELHPDAINSLDEKHQLFDAVRERMKTNDATSILLYGVFLSNTVVTQALIKKYGIEDEANRYVPRWLTRRFLMDEPGMSSFAHALLQPDHNLWMQLWRILPPNTLSTLVNTASSPIPRSRQLAYQCLLHIAQNSPIQIASEGFAIRHLLEAEGDHETCLLRFQVLKTMMESPHGGPKLPFGRYREDILKRLQQGPIVSGASTLKVAAETA</sequence>